<keyword id="KW-0051">Antiviral defense</keyword>
<keyword id="KW-0597">Phosphoprotein</keyword>
<keyword id="KW-0902">Two-component regulatory system</keyword>
<dbReference type="EMBL" id="LJTF01000009">
    <property type="protein sequence ID" value="KPM92282.1"/>
    <property type="molecule type" value="Genomic_DNA"/>
</dbReference>
<dbReference type="RefSeq" id="WP_025767147.1">
    <property type="nucleotide sequence ID" value="NZ_LJTF01000009.1"/>
</dbReference>
<dbReference type="SMR" id="P0DW69"/>
<dbReference type="GO" id="GO:0051607">
    <property type="term" value="P:defense response to virus"/>
    <property type="evidence" value="ECO:0007669"/>
    <property type="project" value="UniProtKB-KW"/>
</dbReference>
<dbReference type="GO" id="GO:0000160">
    <property type="term" value="P:phosphorelay signal transduction system"/>
    <property type="evidence" value="ECO:0007669"/>
    <property type="project" value="UniProtKB-KW"/>
</dbReference>
<dbReference type="CDD" id="cd00156">
    <property type="entry name" value="REC"/>
    <property type="match status" value="1"/>
</dbReference>
<dbReference type="Gene3D" id="3.40.50.2300">
    <property type="match status" value="1"/>
</dbReference>
<dbReference type="InterPro" id="IPR011006">
    <property type="entry name" value="CheY-like_superfamily"/>
</dbReference>
<dbReference type="SUPFAM" id="SSF52172">
    <property type="entry name" value="CheY-like"/>
    <property type="match status" value="1"/>
</dbReference>
<accession>P0DW69</accession>
<organism>
    <name type="scientific">Vibrio alginolyticus</name>
    <dbReference type="NCBI Taxonomy" id="663"/>
    <lineage>
        <taxon>Bacteria</taxon>
        <taxon>Pseudomonadati</taxon>
        <taxon>Pseudomonadota</taxon>
        <taxon>Gammaproteobacteria</taxon>
        <taxon>Vibrionales</taxon>
        <taxon>Vibrionaceae</taxon>
        <taxon>Vibrio</taxon>
    </lineage>
</organism>
<comment type="function">
    <text evidence="2 5">Possible phosphate scavenger member of the two-component regulatory system Detocs that confers resistance to bacteriophage (PubMed:37595565). When the system (DtcA-DtcB-DtcC) is expressed in a susceptible E.coli (strain MG1655) it confers resistance to bacteriophages T2, T4, T5, T6 and SECphi27 (PubMed:37595565). Detocs inhibits T5 infection leading to growth arrest but not complete cell lysis, during SECphi27 infection leads to cell lysis (PubMed:37595565). Overexpression of this protein along with the intact Detocs locus cancels T5 immunity; when the phosphate-receiving Asp-53 is mutated to Ala in this protein, immunity is restored (PubMed:37595565). DtcA probably autophosphorylates upon sensing viral infection, and subsequently transfers the phosphate signal to DtcC which activates it, leading to an antiviral defense; DtcB (this subunit) may scavenge phosphorylation signals from accidental activation of DtcA (Probable) (PubMed:37595565).</text>
</comment>
<comment type="domain">
    <text evidence="2">Consists solely of a response regulatory domain.</text>
</comment>
<comment type="PTM">
    <text evidence="5">Probably phosphorylated by DtcA (PubMed:37595565).</text>
</comment>
<gene>
    <name evidence="3" type="primary">dtcB</name>
    <name evidence="6" type="ORF">AOR10_13880</name>
</gene>
<sequence>MILIVEDDAHKSSQILELVNLVIGSGAEVKLVDNVMDAVRFLFEMTPEKIILDMSLPSHKALPGQGTPVPLPTGGIEVLLELRMKSHMGLPILILTQYPEIEIEDEPVPVAESALTFQEEYGFTDIEACYYDHNDSKPWKQKTMEFLKS</sequence>
<feature type="chain" id="PRO_0000459337" description="Detocs response regulatory protein DtcB">
    <location>
        <begin position="1"/>
        <end position="149"/>
    </location>
</feature>
<feature type="domain" description="Response regulatory" evidence="1">
    <location>
        <begin position="1"/>
        <end position="134"/>
    </location>
</feature>
<feature type="modified residue" description="4-aspartylphosphate" evidence="1">
    <location>
        <position position="53"/>
    </location>
</feature>
<feature type="mutagenesis site" description="Toxic in the Detocs system. No longer toxic; when associated with 'A-353' in DtcC." evidence="2">
    <original>D</original>
    <variation>A</variation>
    <location>
        <position position="53"/>
    </location>
</feature>
<proteinExistence type="evidence at protein level"/>
<name>DTCB_VIBAL</name>
<protein>
    <recommendedName>
        <fullName evidence="4">Detocs response regulatory protein DtcB</fullName>
    </recommendedName>
</protein>
<reference key="1">
    <citation type="submission" date="2015-09" db="EMBL/GenBank/DDBJ databases">
        <title>Draft Genome of Vibrio alginolyticus UCD-32C.</title>
        <authorList>
            <person name="Krusor M."/>
            <person name="Coil D.A."/>
            <person name="Lang J.M."/>
            <person name="Eisen J.A."/>
            <person name="Alexiev A."/>
        </authorList>
    </citation>
    <scope>NUCLEOTIDE SEQUENCE [LARGE SCALE GENOMIC DNA]</scope>
    <source>
        <strain>UCD-32C</strain>
    </source>
</reference>
<reference key="2">
    <citation type="journal article" date="2023" name="Cell">
        <title>A conserved family of immune effectors cleaves cellular ATP upon viral infection.</title>
        <authorList>
            <person name="Rousset F."/>
            <person name="Yirmiya E."/>
            <person name="Nesher S."/>
            <person name="Brandis A."/>
            <person name="Mehlman T."/>
            <person name="Itkin M."/>
            <person name="Malitsky S."/>
            <person name="Millman A."/>
            <person name="Melamed S."/>
            <person name="Sorek R."/>
        </authorList>
    </citation>
    <scope>FUNCTION</scope>
    <scope>FUNCTION IN VIRAL DEFENSE</scope>
    <scope>DOMAIN</scope>
    <scope>MUTAGENESIS OF ASP-53</scope>
    <source>
        <strain>UCD-32C</strain>
    </source>
</reference>
<evidence type="ECO:0000255" key="1">
    <source>
        <dbReference type="PROSITE-ProRule" id="PRU00169"/>
    </source>
</evidence>
<evidence type="ECO:0000269" key="2">
    <source>
    </source>
</evidence>
<evidence type="ECO:0000303" key="3">
    <source>
    </source>
</evidence>
<evidence type="ECO:0000305" key="4"/>
<evidence type="ECO:0000305" key="5">
    <source>
    </source>
</evidence>
<evidence type="ECO:0000312" key="6">
    <source>
        <dbReference type="EMBL" id="KPM92282.1"/>
    </source>
</evidence>